<protein>
    <recommendedName>
        <fullName>Adenylate isopentenyltransferase 8, chloroplastic</fullName>
        <shortName>AtIPT8</shortName>
        <ecNumber>2.5.1.112</ecNumber>
    </recommendedName>
    <alternativeName>
        <fullName>Adenylate dimethylallyltransferase 8</fullName>
    </alternativeName>
    <alternativeName>
        <fullName>Cytokinin synthase 8</fullName>
    </alternativeName>
    <alternativeName>
        <fullName>Plant growth activator 22</fullName>
    </alternativeName>
</protein>
<name>IPT8_ARATH</name>
<keyword id="KW-0067">ATP-binding</keyword>
<keyword id="KW-0150">Chloroplast</keyword>
<keyword id="KW-0203">Cytokinin biosynthesis</keyword>
<keyword id="KW-0547">Nucleotide-binding</keyword>
<keyword id="KW-0934">Plastid</keyword>
<keyword id="KW-1185">Reference proteome</keyword>
<keyword id="KW-0808">Transferase</keyword>
<keyword id="KW-0809">Transit peptide</keyword>
<sequence>MQNLTSTFVSPSMIPITSPRLRLPPPRSVVPMTTVCMEQSYKQKVVVIMGATGSGKSCLSIDLATRFSGEIVNSDKIQFYDGLKVTTNQMSILERCGVPHHLLGELPPDDSELTTSEFRSLASRSISEITARGNLPIIAGGSNSFIHALLVDRFDPKTYPFSSETSISSGLRYECCFLWVDVSVSVLFEYLSKRVDQMMESGMFEELAGFYDPRYSGSAIRAHGIHKTIGIPEFDRYFSLYPPERKQKMSEWDQARKGAYDEAVQEIKENTWRLAKKQIERIMKLKSSGWDIQRLDATPSFGRSSREIWDNTVLDESIKVVKRFLVKDKV</sequence>
<comment type="function">
    <text evidence="2 3 6">Involved in cytokinin biosynthesis. Catalyzes the transfer of an isopentenyl group from dimethylallyl diphosphate (DMAPP) to ATP and ADP.</text>
</comment>
<comment type="catalytic activity">
    <reaction>
        <text>dimethylallyl diphosphate + ADP = N(6)-(dimethylallyl)adenosine 5'-diphosphate + diphosphate</text>
        <dbReference type="Rhea" id="RHEA:36327"/>
        <dbReference type="ChEBI" id="CHEBI:33019"/>
        <dbReference type="ChEBI" id="CHEBI:57623"/>
        <dbReference type="ChEBI" id="CHEBI:73533"/>
        <dbReference type="ChEBI" id="CHEBI:456216"/>
        <dbReference type="EC" id="2.5.1.112"/>
    </reaction>
</comment>
<comment type="catalytic activity">
    <reaction>
        <text>dimethylallyl diphosphate + ATP = N(6)-(dimethylallyl)adenosine 5'-triphosphate + diphosphate</text>
        <dbReference type="Rhea" id="RHEA:36331"/>
        <dbReference type="ChEBI" id="CHEBI:30616"/>
        <dbReference type="ChEBI" id="CHEBI:33019"/>
        <dbReference type="ChEBI" id="CHEBI:57623"/>
        <dbReference type="ChEBI" id="CHEBI:73532"/>
        <dbReference type="EC" id="2.5.1.112"/>
    </reaction>
</comment>
<comment type="subcellular location">
    <subcellularLocation>
        <location evidence="5">Plastid</location>
        <location evidence="5">Chloroplast</location>
    </subcellularLocation>
</comment>
<comment type="tissue specificity">
    <text evidence="3 4">Expressed in roots and in immature seeds with highest expression in the chalazal endosperm.</text>
</comment>
<comment type="developmental stage">
    <text evidence="4">Expressed at the early stages of embryo development, up to the late heart stage.</text>
</comment>
<comment type="disruption phenotype">
    <text evidence="6">No visible phenotype, due the redundancy with other IPTs.</text>
</comment>
<comment type="similarity">
    <text evidence="7">Belongs to the IPP transferase family.</text>
</comment>
<reference key="1">
    <citation type="journal article" date="2001" name="J. Biol. Chem.">
        <title>Identification of genes encoding adenylate isopentenyltransferase, a cytokinin biosynthesis enzyme, in Arabidopsis thaliana.</title>
        <authorList>
            <person name="Takei K."/>
            <person name="Sakakibara H."/>
            <person name="Sugiyama T."/>
        </authorList>
    </citation>
    <scope>NUCLEOTIDE SEQUENCE [MRNA]</scope>
    <scope>FUNCTION</scope>
    <scope>GENE FAMILY</scope>
    <source>
        <strain>cv. Columbia</strain>
    </source>
</reference>
<reference key="2">
    <citation type="journal article" date="2001" name="Plant Cell Physiol.">
        <title>Identification of plant cytokinin biosynthetic enzymes as dimethylallyl diphosphate:ATP/ADP isopentenyltransferases.</title>
        <authorList>
            <person name="Kakimoto T."/>
        </authorList>
    </citation>
    <scope>NUCLEOTIDE SEQUENCE [MRNA]</scope>
    <scope>GENE FAMILY</scope>
    <source>
        <strain>cv. Wassilewskija</strain>
    </source>
</reference>
<reference key="3">
    <citation type="journal article" date="2000" name="DNA Res.">
        <title>Structural analysis of Arabidopsis thaliana chromosome 3. II. Sequence features of the 4,251,695 bp regions covered by 90 P1, TAC and BAC clones.</title>
        <authorList>
            <person name="Kaneko T."/>
            <person name="Katoh T."/>
            <person name="Sato S."/>
            <person name="Nakamura Y."/>
            <person name="Asamizu E."/>
            <person name="Tabata S."/>
        </authorList>
    </citation>
    <scope>NUCLEOTIDE SEQUENCE [LARGE SCALE GENOMIC DNA]</scope>
    <source>
        <strain>cv. Columbia</strain>
    </source>
</reference>
<reference key="4">
    <citation type="journal article" date="2017" name="Plant J.">
        <title>Araport11: a complete reannotation of the Arabidopsis thaliana reference genome.</title>
        <authorList>
            <person name="Cheng C.Y."/>
            <person name="Krishnakumar V."/>
            <person name="Chan A.P."/>
            <person name="Thibaud-Nissen F."/>
            <person name="Schobel S."/>
            <person name="Town C.D."/>
        </authorList>
    </citation>
    <scope>GENOME REANNOTATION</scope>
    <source>
        <strain>cv. Columbia</strain>
    </source>
</reference>
<reference key="5">
    <citation type="journal article" date="2003" name="Plant Physiol.">
        <title>The Arabidopsis AtIPT8/PGA22 gene encodes an isopentenyl transferase that is involved in de novo cytokinin biosynthesis.</title>
        <authorList>
            <person name="Sun J."/>
            <person name="Niu Q.W."/>
            <person name="Tarkowski P."/>
            <person name="Zheng B."/>
            <person name="Tarkowska D."/>
            <person name="Sandberg G."/>
            <person name="Chua N.H."/>
            <person name="Zuo J."/>
        </authorList>
    </citation>
    <scope>FUNCTION</scope>
    <scope>TISSUE SPECIFICITY</scope>
</reference>
<reference key="6">
    <citation type="journal article" date="2004" name="J. Biol. Chem.">
        <title>Distinct isoprenoid origins of cis- and trans-zeatin biosyntheses in Arabidopsis.</title>
        <authorList>
            <person name="Kasahara H."/>
            <person name="Takei K."/>
            <person name="Ueda N."/>
            <person name="Hishiyama S."/>
            <person name="Yamaya T."/>
            <person name="Kamiya Y."/>
            <person name="Yamaguchi S."/>
            <person name="Sakakibara H."/>
        </authorList>
    </citation>
    <scope>SUBCELLULAR LOCATION</scope>
</reference>
<reference key="7">
    <citation type="journal article" date="2004" name="Plant J.">
        <title>Expression of cytokinin biosynthetic isopentenyltransferase genes in Arabidopsis: tissue specificity and regulation by auxin, cytokinin, and nitrate.</title>
        <authorList>
            <person name="Miyawaki K."/>
            <person name="Matsumoto-Kitano M."/>
            <person name="Kakimoto T."/>
        </authorList>
    </citation>
    <scope>TISSUE SPECIFICITY</scope>
    <scope>DEVELOPMENTAL STAGE</scope>
</reference>
<reference key="8">
    <citation type="journal article" date="2006" name="Proc. Natl. Acad. Sci. U.S.A.">
        <title>Roles of Arabidopsis ATP/ADP isopentenyltransferases and tRNA isopentenyltransferases in cytokinin biosynthesis.</title>
        <authorList>
            <person name="Miyawaki K."/>
            <person name="Tarkowski P."/>
            <person name="Matsumoto-Kitano M."/>
            <person name="Kato T."/>
            <person name="Sato S."/>
            <person name="Tarkowska D."/>
            <person name="Tabata S."/>
            <person name="Sandberg G."/>
            <person name="Kakimoto T."/>
        </authorList>
    </citation>
    <scope>FUNCTION</scope>
    <scope>DISRUPTION PHENOTYPE</scope>
</reference>
<feature type="transit peptide" description="Chloroplast" evidence="1">
    <location>
        <begin position="1"/>
        <end position="35"/>
    </location>
</feature>
<feature type="chain" id="PRO_0000391076" description="Adenylate isopentenyltransferase 8, chloroplastic">
    <location>
        <begin position="36"/>
        <end position="330"/>
    </location>
</feature>
<feature type="binding site" evidence="1">
    <location>
        <begin position="50"/>
        <end position="57"/>
    </location>
    <ligand>
        <name>ATP</name>
        <dbReference type="ChEBI" id="CHEBI:30616"/>
    </ligand>
</feature>
<organism>
    <name type="scientific">Arabidopsis thaliana</name>
    <name type="common">Mouse-ear cress</name>
    <dbReference type="NCBI Taxonomy" id="3702"/>
    <lineage>
        <taxon>Eukaryota</taxon>
        <taxon>Viridiplantae</taxon>
        <taxon>Streptophyta</taxon>
        <taxon>Embryophyta</taxon>
        <taxon>Tracheophyta</taxon>
        <taxon>Spermatophyta</taxon>
        <taxon>Magnoliopsida</taxon>
        <taxon>eudicotyledons</taxon>
        <taxon>Gunneridae</taxon>
        <taxon>Pentapetalae</taxon>
        <taxon>rosids</taxon>
        <taxon>malvids</taxon>
        <taxon>Brassicales</taxon>
        <taxon>Brassicaceae</taxon>
        <taxon>Camelineae</taxon>
        <taxon>Arabidopsis</taxon>
    </lineage>
</organism>
<evidence type="ECO:0000255" key="1"/>
<evidence type="ECO:0000269" key="2">
    <source>
    </source>
</evidence>
<evidence type="ECO:0000269" key="3">
    <source>
    </source>
</evidence>
<evidence type="ECO:0000269" key="4">
    <source>
    </source>
</evidence>
<evidence type="ECO:0000269" key="5">
    <source>
    </source>
</evidence>
<evidence type="ECO:0000269" key="6">
    <source>
    </source>
</evidence>
<evidence type="ECO:0000305" key="7"/>
<proteinExistence type="evidence at transcript level"/>
<dbReference type="EC" id="2.5.1.112"/>
<dbReference type="EMBL" id="AB062614">
    <property type="protein sequence ID" value="BAB59047.1"/>
    <property type="molecule type" value="mRNA"/>
</dbReference>
<dbReference type="EMBL" id="AB061406">
    <property type="protein sequence ID" value="BAB59034.1"/>
    <property type="molecule type" value="mRNA"/>
</dbReference>
<dbReference type="EMBL" id="AP000419">
    <property type="protein sequence ID" value="BAB02956.1"/>
    <property type="molecule type" value="Genomic_DNA"/>
</dbReference>
<dbReference type="EMBL" id="CP002686">
    <property type="protein sequence ID" value="AEE76200.1"/>
    <property type="molecule type" value="Genomic_DNA"/>
</dbReference>
<dbReference type="RefSeq" id="NP_188547.1">
    <property type="nucleotide sequence ID" value="NM_112803.1"/>
</dbReference>
<dbReference type="SMR" id="Q9LJL4"/>
<dbReference type="STRING" id="3702.Q9LJL4"/>
<dbReference type="GlyGen" id="Q9LJL4">
    <property type="glycosylation" value="1 site"/>
</dbReference>
<dbReference type="iPTMnet" id="Q9LJL4"/>
<dbReference type="PaxDb" id="3702-AT3G19160.1"/>
<dbReference type="EnsemblPlants" id="AT3G19160.1">
    <property type="protein sequence ID" value="AT3G19160.1"/>
    <property type="gene ID" value="AT3G19160"/>
</dbReference>
<dbReference type="GeneID" id="821450"/>
<dbReference type="Gramene" id="AT3G19160.1">
    <property type="protein sequence ID" value="AT3G19160.1"/>
    <property type="gene ID" value="AT3G19160"/>
</dbReference>
<dbReference type="KEGG" id="ath:AT3G19160"/>
<dbReference type="Araport" id="AT3G19160"/>
<dbReference type="TAIR" id="AT3G19160">
    <property type="gene designation" value="IPT8"/>
</dbReference>
<dbReference type="eggNOG" id="KOG1384">
    <property type="taxonomic scope" value="Eukaryota"/>
</dbReference>
<dbReference type="HOGENOM" id="CLU_032616_4_1_1"/>
<dbReference type="InParanoid" id="Q9LJL4"/>
<dbReference type="OMA" id="PMTVCMD"/>
<dbReference type="PhylomeDB" id="Q9LJL4"/>
<dbReference type="BioCyc" id="ARA:AT3G19160-MONOMER"/>
<dbReference type="BioCyc" id="MetaCyc:AT3G19160-MONOMER"/>
<dbReference type="BRENDA" id="2.5.1.112">
    <property type="organism ID" value="399"/>
</dbReference>
<dbReference type="PRO" id="PR:Q9LJL4"/>
<dbReference type="Proteomes" id="UP000006548">
    <property type="component" value="Chromosome 3"/>
</dbReference>
<dbReference type="ExpressionAtlas" id="Q9LJL4">
    <property type="expression patterns" value="baseline and differential"/>
</dbReference>
<dbReference type="GO" id="GO:0009507">
    <property type="term" value="C:chloroplast"/>
    <property type="evidence" value="ECO:0007669"/>
    <property type="project" value="UniProtKB-SubCell"/>
</dbReference>
<dbReference type="GO" id="GO:0009824">
    <property type="term" value="F:AMP dimethylallyltransferase activity"/>
    <property type="evidence" value="ECO:0000250"/>
    <property type="project" value="TAIR"/>
</dbReference>
<dbReference type="GO" id="GO:0005524">
    <property type="term" value="F:ATP binding"/>
    <property type="evidence" value="ECO:0007669"/>
    <property type="project" value="UniProtKB-KW"/>
</dbReference>
<dbReference type="GO" id="GO:0052622">
    <property type="term" value="F:ATP/ADP dimethylallyltransferase activity"/>
    <property type="evidence" value="ECO:0000250"/>
    <property type="project" value="TAIR"/>
</dbReference>
<dbReference type="GO" id="GO:0009691">
    <property type="term" value="P:cytokinin biosynthetic process"/>
    <property type="evidence" value="ECO:0000304"/>
    <property type="project" value="TAIR"/>
</dbReference>
<dbReference type="FunFam" id="1.10.287.890:FF:000003">
    <property type="entry name" value="Adenylate isopentenyltransferase"/>
    <property type="match status" value="1"/>
</dbReference>
<dbReference type="Gene3D" id="1.10.287.890">
    <property type="entry name" value="Crystal structure of tRNA isopentenylpyrophosphate transferase (bh2366) domain"/>
    <property type="match status" value="1"/>
</dbReference>
<dbReference type="Gene3D" id="3.40.50.300">
    <property type="entry name" value="P-loop containing nucleotide triphosphate hydrolases"/>
    <property type="match status" value="1"/>
</dbReference>
<dbReference type="InterPro" id="IPR039657">
    <property type="entry name" value="Dimethylallyltransferase"/>
</dbReference>
<dbReference type="InterPro" id="IPR027417">
    <property type="entry name" value="P-loop_NTPase"/>
</dbReference>
<dbReference type="PANTHER" id="PTHR11088:SF86">
    <property type="entry name" value="ADENYLATE ISOPENTENYLTRANSFERASE 4-RELATED"/>
    <property type="match status" value="1"/>
</dbReference>
<dbReference type="PANTHER" id="PTHR11088">
    <property type="entry name" value="TRNA DIMETHYLALLYLTRANSFERASE"/>
    <property type="match status" value="1"/>
</dbReference>
<dbReference type="Pfam" id="PF01715">
    <property type="entry name" value="IPPT"/>
    <property type="match status" value="2"/>
</dbReference>
<dbReference type="SUPFAM" id="SSF52540">
    <property type="entry name" value="P-loop containing nucleoside triphosphate hydrolases"/>
    <property type="match status" value="1"/>
</dbReference>
<accession>Q9LJL4</accession>
<gene>
    <name type="primary">IPT8</name>
    <name type="synonym">PGA22</name>
    <name type="ordered locus">At3g19160</name>
    <name type="ORF">MVI11.16</name>
</gene>